<organism>
    <name type="scientific">Homo sapiens</name>
    <name type="common">Human</name>
    <dbReference type="NCBI Taxonomy" id="9606"/>
    <lineage>
        <taxon>Eukaryota</taxon>
        <taxon>Metazoa</taxon>
        <taxon>Chordata</taxon>
        <taxon>Craniata</taxon>
        <taxon>Vertebrata</taxon>
        <taxon>Euteleostomi</taxon>
        <taxon>Mammalia</taxon>
        <taxon>Eutheria</taxon>
        <taxon>Euarchontoglires</taxon>
        <taxon>Primates</taxon>
        <taxon>Haplorrhini</taxon>
        <taxon>Catarrhini</taxon>
        <taxon>Hominidae</taxon>
        <taxon>Homo</taxon>
    </lineage>
</organism>
<accession>P0C880</accession>
<keyword id="KW-1185">Reference proteome</keyword>
<protein>
    <recommendedName>
        <fullName>Putative uncharacterized protein FLJ40606</fullName>
    </recommendedName>
</protein>
<evidence type="ECO:0000256" key="1">
    <source>
        <dbReference type="SAM" id="MobiDB-lite"/>
    </source>
</evidence>
<evidence type="ECO:0000305" key="2"/>
<sequence length="135" mass="14177">MAAATETGQAAVPSRKRRRGRRPPASDPQTLARLAAGPWLPGTLTCPERTGGDAATRSARPPVLPPPPRPPQRRCRHLVSRAGTPRCACAGTASEGPRRGRAAILSVAGSAGSSHPACFRPPPLLPIRPCCSLWR</sequence>
<reference key="1">
    <citation type="journal article" date="2004" name="Nat. Genet.">
        <title>Complete sequencing and characterization of 21,243 full-length human cDNAs.</title>
        <authorList>
            <person name="Ota T."/>
            <person name="Suzuki Y."/>
            <person name="Nishikawa T."/>
            <person name="Otsuki T."/>
            <person name="Sugiyama T."/>
            <person name="Irie R."/>
            <person name="Wakamatsu A."/>
            <person name="Hayashi K."/>
            <person name="Sato H."/>
            <person name="Nagai K."/>
            <person name="Kimura K."/>
            <person name="Makita H."/>
            <person name="Sekine M."/>
            <person name="Obayashi M."/>
            <person name="Nishi T."/>
            <person name="Shibahara T."/>
            <person name="Tanaka T."/>
            <person name="Ishii S."/>
            <person name="Yamamoto J."/>
            <person name="Saito K."/>
            <person name="Kawai Y."/>
            <person name="Isono Y."/>
            <person name="Nakamura Y."/>
            <person name="Nagahari K."/>
            <person name="Murakami K."/>
            <person name="Yasuda T."/>
            <person name="Iwayanagi T."/>
            <person name="Wagatsuma M."/>
            <person name="Shiratori A."/>
            <person name="Sudo H."/>
            <person name="Hosoiri T."/>
            <person name="Kaku Y."/>
            <person name="Kodaira H."/>
            <person name="Kondo H."/>
            <person name="Sugawara M."/>
            <person name="Takahashi M."/>
            <person name="Kanda K."/>
            <person name="Yokoi T."/>
            <person name="Furuya T."/>
            <person name="Kikkawa E."/>
            <person name="Omura Y."/>
            <person name="Abe K."/>
            <person name="Kamihara K."/>
            <person name="Katsuta N."/>
            <person name="Sato K."/>
            <person name="Tanikawa M."/>
            <person name="Yamazaki M."/>
            <person name="Ninomiya K."/>
            <person name="Ishibashi T."/>
            <person name="Yamashita H."/>
            <person name="Murakawa K."/>
            <person name="Fujimori K."/>
            <person name="Tanai H."/>
            <person name="Kimata M."/>
            <person name="Watanabe M."/>
            <person name="Hiraoka S."/>
            <person name="Chiba Y."/>
            <person name="Ishida S."/>
            <person name="Ono Y."/>
            <person name="Takiguchi S."/>
            <person name="Watanabe S."/>
            <person name="Yosida M."/>
            <person name="Hotuta T."/>
            <person name="Kusano J."/>
            <person name="Kanehori K."/>
            <person name="Takahashi-Fujii A."/>
            <person name="Hara H."/>
            <person name="Tanase T.-O."/>
            <person name="Nomura Y."/>
            <person name="Togiya S."/>
            <person name="Komai F."/>
            <person name="Hara R."/>
            <person name="Takeuchi K."/>
            <person name="Arita M."/>
            <person name="Imose N."/>
            <person name="Musashino K."/>
            <person name="Yuuki H."/>
            <person name="Oshima A."/>
            <person name="Sasaki N."/>
            <person name="Aotsuka S."/>
            <person name="Yoshikawa Y."/>
            <person name="Matsunawa H."/>
            <person name="Ichihara T."/>
            <person name="Shiohata N."/>
            <person name="Sano S."/>
            <person name="Moriya S."/>
            <person name="Momiyama H."/>
            <person name="Satoh N."/>
            <person name="Takami S."/>
            <person name="Terashima Y."/>
            <person name="Suzuki O."/>
            <person name="Nakagawa S."/>
            <person name="Senoh A."/>
            <person name="Mizoguchi H."/>
            <person name="Goto Y."/>
            <person name="Shimizu F."/>
            <person name="Wakebe H."/>
            <person name="Hishigaki H."/>
            <person name="Watanabe T."/>
            <person name="Sugiyama A."/>
            <person name="Takemoto M."/>
            <person name="Kawakami B."/>
            <person name="Yamazaki M."/>
            <person name="Watanabe K."/>
            <person name="Kumagai A."/>
            <person name="Itakura S."/>
            <person name="Fukuzumi Y."/>
            <person name="Fujimori Y."/>
            <person name="Komiyama M."/>
            <person name="Tashiro H."/>
            <person name="Tanigami A."/>
            <person name="Fujiwara T."/>
            <person name="Ono T."/>
            <person name="Yamada K."/>
            <person name="Fujii Y."/>
            <person name="Ozaki K."/>
            <person name="Hirao M."/>
            <person name="Ohmori Y."/>
            <person name="Kawabata A."/>
            <person name="Hikiji T."/>
            <person name="Kobatake N."/>
            <person name="Inagaki H."/>
            <person name="Ikema Y."/>
            <person name="Okamoto S."/>
            <person name="Okitani R."/>
            <person name="Kawakami T."/>
            <person name="Noguchi S."/>
            <person name="Itoh T."/>
            <person name="Shigeta K."/>
            <person name="Senba T."/>
            <person name="Matsumura K."/>
            <person name="Nakajima Y."/>
            <person name="Mizuno T."/>
            <person name="Morinaga M."/>
            <person name="Sasaki M."/>
            <person name="Togashi T."/>
            <person name="Oyama M."/>
            <person name="Hata H."/>
            <person name="Watanabe M."/>
            <person name="Komatsu T."/>
            <person name="Mizushima-Sugano J."/>
            <person name="Satoh T."/>
            <person name="Shirai Y."/>
            <person name="Takahashi Y."/>
            <person name="Nakagawa K."/>
            <person name="Okumura K."/>
            <person name="Nagase T."/>
            <person name="Nomura N."/>
            <person name="Kikuchi H."/>
            <person name="Masuho Y."/>
            <person name="Yamashita R."/>
            <person name="Nakai K."/>
            <person name="Yada T."/>
            <person name="Nakamura Y."/>
            <person name="Ohara O."/>
            <person name="Isogai T."/>
            <person name="Sugano S."/>
        </authorList>
    </citation>
    <scope>NUCLEOTIDE SEQUENCE [LARGE SCALE MRNA]</scope>
    <source>
        <tissue>Thymus</tissue>
    </source>
</reference>
<proteinExistence type="uncertain"/>
<dbReference type="EMBL" id="AK097925">
    <property type="status" value="NOT_ANNOTATED_CDS"/>
    <property type="molecule type" value="mRNA"/>
</dbReference>
<dbReference type="GlyGen" id="P0C880">
    <property type="glycosylation" value="1 site, 1 O-linked glycan (1 site)"/>
</dbReference>
<dbReference type="BioMuta" id="-"/>
<dbReference type="MassIVE" id="P0C880"/>
<dbReference type="neXtProt" id="NX_P0C880"/>
<dbReference type="InParanoid" id="P0C880"/>
<dbReference type="PAN-GO" id="P0C880">
    <property type="GO annotations" value="0 GO annotations based on evolutionary models"/>
</dbReference>
<dbReference type="PhylomeDB" id="P0C880"/>
<dbReference type="Pharos" id="P0C880">
    <property type="development level" value="Tdark"/>
</dbReference>
<dbReference type="Proteomes" id="UP000005640">
    <property type="component" value="Unplaced"/>
</dbReference>
<dbReference type="RNAct" id="P0C880">
    <property type="molecule type" value="protein"/>
</dbReference>
<name>YT014_HUMAN</name>
<comment type="caution">
    <text evidence="2">Product of a dubious CDS prediction.</text>
</comment>
<feature type="chain" id="PRO_0000349230" description="Putative uncharacterized protein FLJ40606">
    <location>
        <begin position="1"/>
        <end position="135"/>
    </location>
</feature>
<feature type="region of interest" description="Disordered" evidence="1">
    <location>
        <begin position="1"/>
        <end position="75"/>
    </location>
</feature>